<organism>
    <name type="scientific">Bacillus subtilis (strain 168)</name>
    <dbReference type="NCBI Taxonomy" id="224308"/>
    <lineage>
        <taxon>Bacteria</taxon>
        <taxon>Bacillati</taxon>
        <taxon>Bacillota</taxon>
        <taxon>Bacilli</taxon>
        <taxon>Bacillales</taxon>
        <taxon>Bacillaceae</taxon>
        <taxon>Bacillus</taxon>
    </lineage>
</organism>
<sequence length="377" mass="42568">MKIKSIEPTPSPNTMKVILTEELPAGKSNNYKPEQAEGAPLVIAEILKIDGVKGVYHVADFLAVERNARYDWKDILPQVRTAFGMESAESAEENRSDQESFGEVKVFVQMFSGIPMQVKLTDGEREERFGLPERFQQAILKLRSEASNVVFERAWKEQGVRFGDFDEIGHDVTEELQAAYSDERLKRLTEAAAQGKGEAKQAVQRKAYKVTLDMLDDEDWKKRYAHLEQMDPKEEDIPVLQKALDDPKVSIRRQAVVYLGMIETPDVLPLLYKALEDKAVSVRRTAGDCLSDIGDPQAIPAMIKSLSDSSKLVRWRAAMFLYEVGDESAIEALRAAEDDPEFEVSLQVKMALERIEHGEEAKGSVWKQMTESRKKGE</sequence>
<keyword id="KW-1185">Reference proteome</keyword>
<reference key="1">
    <citation type="journal article" date="1996" name="Microbiology">
        <title>Organization of the Bacillus subtilis 168 chromosome between kdg and the attachment site of the SP beta prophage: use of long accurate PCR and yeast artificial chromosomes for sequencing.</title>
        <authorList>
            <person name="Capuano V."/>
            <person name="Galleron N."/>
            <person name="Pujic P."/>
            <person name="Sorokin A."/>
            <person name="Ehrlich S.D."/>
        </authorList>
    </citation>
    <scope>NUCLEOTIDE SEQUENCE [GENOMIC DNA]</scope>
    <source>
        <strain>168 / Marburg / ATCC 6051 / DSM 10 / JCM 1465 / NBRC 13719 / NCIMB 3610 / NRRL NRS-744 / VKM B-501</strain>
    </source>
</reference>
<reference key="2">
    <citation type="journal article" date="1997" name="Nature">
        <title>The complete genome sequence of the Gram-positive bacterium Bacillus subtilis.</title>
        <authorList>
            <person name="Kunst F."/>
            <person name="Ogasawara N."/>
            <person name="Moszer I."/>
            <person name="Albertini A.M."/>
            <person name="Alloni G."/>
            <person name="Azevedo V."/>
            <person name="Bertero M.G."/>
            <person name="Bessieres P."/>
            <person name="Bolotin A."/>
            <person name="Borchert S."/>
            <person name="Borriss R."/>
            <person name="Boursier L."/>
            <person name="Brans A."/>
            <person name="Braun M."/>
            <person name="Brignell S.C."/>
            <person name="Bron S."/>
            <person name="Brouillet S."/>
            <person name="Bruschi C.V."/>
            <person name="Caldwell B."/>
            <person name="Capuano V."/>
            <person name="Carter N.M."/>
            <person name="Choi S.-K."/>
            <person name="Codani J.-J."/>
            <person name="Connerton I.F."/>
            <person name="Cummings N.J."/>
            <person name="Daniel R.A."/>
            <person name="Denizot F."/>
            <person name="Devine K.M."/>
            <person name="Duesterhoeft A."/>
            <person name="Ehrlich S.D."/>
            <person name="Emmerson P.T."/>
            <person name="Entian K.-D."/>
            <person name="Errington J."/>
            <person name="Fabret C."/>
            <person name="Ferrari E."/>
            <person name="Foulger D."/>
            <person name="Fritz C."/>
            <person name="Fujita M."/>
            <person name="Fujita Y."/>
            <person name="Fuma S."/>
            <person name="Galizzi A."/>
            <person name="Galleron N."/>
            <person name="Ghim S.-Y."/>
            <person name="Glaser P."/>
            <person name="Goffeau A."/>
            <person name="Golightly E.J."/>
            <person name="Grandi G."/>
            <person name="Guiseppi G."/>
            <person name="Guy B.J."/>
            <person name="Haga K."/>
            <person name="Haiech J."/>
            <person name="Harwood C.R."/>
            <person name="Henaut A."/>
            <person name="Hilbert H."/>
            <person name="Holsappel S."/>
            <person name="Hosono S."/>
            <person name="Hullo M.-F."/>
            <person name="Itaya M."/>
            <person name="Jones L.-M."/>
            <person name="Joris B."/>
            <person name="Karamata D."/>
            <person name="Kasahara Y."/>
            <person name="Klaerr-Blanchard M."/>
            <person name="Klein C."/>
            <person name="Kobayashi Y."/>
            <person name="Koetter P."/>
            <person name="Koningstein G."/>
            <person name="Krogh S."/>
            <person name="Kumano M."/>
            <person name="Kurita K."/>
            <person name="Lapidus A."/>
            <person name="Lardinois S."/>
            <person name="Lauber J."/>
            <person name="Lazarevic V."/>
            <person name="Lee S.-M."/>
            <person name="Levine A."/>
            <person name="Liu H."/>
            <person name="Masuda S."/>
            <person name="Mauel C."/>
            <person name="Medigue C."/>
            <person name="Medina N."/>
            <person name="Mellado R.P."/>
            <person name="Mizuno M."/>
            <person name="Moestl D."/>
            <person name="Nakai S."/>
            <person name="Noback M."/>
            <person name="Noone D."/>
            <person name="O'Reilly M."/>
            <person name="Ogawa K."/>
            <person name="Ogiwara A."/>
            <person name="Oudega B."/>
            <person name="Park S.-H."/>
            <person name="Parro V."/>
            <person name="Pohl T.M."/>
            <person name="Portetelle D."/>
            <person name="Porwollik S."/>
            <person name="Prescott A.M."/>
            <person name="Presecan E."/>
            <person name="Pujic P."/>
            <person name="Purnelle B."/>
            <person name="Rapoport G."/>
            <person name="Rey M."/>
            <person name="Reynolds S."/>
            <person name="Rieger M."/>
            <person name="Rivolta C."/>
            <person name="Rocha E."/>
            <person name="Roche B."/>
            <person name="Rose M."/>
            <person name="Sadaie Y."/>
            <person name="Sato T."/>
            <person name="Scanlan E."/>
            <person name="Schleich S."/>
            <person name="Schroeter R."/>
            <person name="Scoffone F."/>
            <person name="Sekiguchi J."/>
            <person name="Sekowska A."/>
            <person name="Seror S.J."/>
            <person name="Serror P."/>
            <person name="Shin B.-S."/>
            <person name="Soldo B."/>
            <person name="Sorokin A."/>
            <person name="Tacconi E."/>
            <person name="Takagi T."/>
            <person name="Takahashi H."/>
            <person name="Takemaru K."/>
            <person name="Takeuchi M."/>
            <person name="Tamakoshi A."/>
            <person name="Tanaka T."/>
            <person name="Terpstra P."/>
            <person name="Tognoni A."/>
            <person name="Tosato V."/>
            <person name="Uchiyama S."/>
            <person name="Vandenbol M."/>
            <person name="Vannier F."/>
            <person name="Vassarotti A."/>
            <person name="Viari A."/>
            <person name="Wambutt R."/>
            <person name="Wedler E."/>
            <person name="Wedler H."/>
            <person name="Weitzenegger T."/>
            <person name="Winters P."/>
            <person name="Wipat A."/>
            <person name="Yamamoto H."/>
            <person name="Yamane K."/>
            <person name="Yasumoto K."/>
            <person name="Yata K."/>
            <person name="Yoshida K."/>
            <person name="Yoshikawa H.-F."/>
            <person name="Zumstein E."/>
            <person name="Yoshikawa H."/>
            <person name="Danchin A."/>
        </authorList>
    </citation>
    <scope>NUCLEOTIDE SEQUENCE [LARGE SCALE GENOMIC DNA]</scope>
    <source>
        <strain>168</strain>
    </source>
</reference>
<accession>P54169</accession>
<protein>
    <recommendedName>
        <fullName>Uncharacterized protein YpgR</fullName>
    </recommendedName>
</protein>
<proteinExistence type="predicted"/>
<name>YPGR_BACSU</name>
<gene>
    <name type="primary">ypgR</name>
    <name type="ordered locus">BSU21880</name>
</gene>
<feature type="chain" id="PRO_0000049693" description="Uncharacterized protein YpgR">
    <location>
        <begin position="1"/>
        <end position="377"/>
    </location>
</feature>
<dbReference type="EMBL" id="L77246">
    <property type="protein sequence ID" value="AAA96628.1"/>
    <property type="molecule type" value="Genomic_DNA"/>
</dbReference>
<dbReference type="EMBL" id="AL009126">
    <property type="protein sequence ID" value="CAB14106.1"/>
    <property type="molecule type" value="Genomic_DNA"/>
</dbReference>
<dbReference type="PIR" id="F69935">
    <property type="entry name" value="F69935"/>
</dbReference>
<dbReference type="RefSeq" id="NP_390071.1">
    <property type="nucleotide sequence ID" value="NC_000964.3"/>
</dbReference>
<dbReference type="RefSeq" id="WP_004398677.1">
    <property type="nucleotide sequence ID" value="NZ_OZ025638.1"/>
</dbReference>
<dbReference type="SMR" id="P54169"/>
<dbReference type="FunCoup" id="P54169">
    <property type="interactions" value="1"/>
</dbReference>
<dbReference type="STRING" id="224308.BSU21880"/>
<dbReference type="jPOST" id="P54169"/>
<dbReference type="PaxDb" id="224308-BSU21880"/>
<dbReference type="DNASU" id="939082"/>
<dbReference type="EnsemblBacteria" id="CAB14106">
    <property type="protein sequence ID" value="CAB14106"/>
    <property type="gene ID" value="BSU_21880"/>
</dbReference>
<dbReference type="GeneID" id="939082"/>
<dbReference type="KEGG" id="bsu:BSU21880"/>
<dbReference type="PATRIC" id="fig|224308.179.peg.2390"/>
<dbReference type="eggNOG" id="COG1413">
    <property type="taxonomic scope" value="Bacteria"/>
</dbReference>
<dbReference type="InParanoid" id="P54169"/>
<dbReference type="OrthoDB" id="420201at2"/>
<dbReference type="PhylomeDB" id="P54169"/>
<dbReference type="BioCyc" id="BSUB:BSU21880-MONOMER"/>
<dbReference type="Proteomes" id="UP000001570">
    <property type="component" value="Chromosome"/>
</dbReference>
<dbReference type="GO" id="GO:0016491">
    <property type="term" value="F:oxidoreductase activity"/>
    <property type="evidence" value="ECO:0000318"/>
    <property type="project" value="GO_Central"/>
</dbReference>
<dbReference type="Gene3D" id="1.25.10.10">
    <property type="entry name" value="Leucine-rich Repeat Variant"/>
    <property type="match status" value="1"/>
</dbReference>
<dbReference type="Gene3D" id="3.30.1370.70">
    <property type="entry name" value="Scaffold protein Nfu/NifU, N-terminal domain"/>
    <property type="match status" value="1"/>
</dbReference>
<dbReference type="InterPro" id="IPR011989">
    <property type="entry name" value="ARM-like"/>
</dbReference>
<dbReference type="InterPro" id="IPR016024">
    <property type="entry name" value="ARM-type_fold"/>
</dbReference>
<dbReference type="InterPro" id="IPR014824">
    <property type="entry name" value="Nfu/NifU_N"/>
</dbReference>
<dbReference type="InterPro" id="IPR036498">
    <property type="entry name" value="Nfu/NifU_N_sf"/>
</dbReference>
<dbReference type="InterPro" id="IPR004155">
    <property type="entry name" value="PBS_lyase_HEAT"/>
</dbReference>
<dbReference type="InterPro" id="IPR025989">
    <property type="entry name" value="Virulence_F_dom"/>
</dbReference>
<dbReference type="PANTHER" id="PTHR12697:SF37">
    <property type="entry name" value="CONSERVED VIRULENCE FACTOR C"/>
    <property type="match status" value="1"/>
</dbReference>
<dbReference type="PANTHER" id="PTHR12697">
    <property type="entry name" value="PBS LYASE HEAT-LIKE PROTEIN"/>
    <property type="match status" value="1"/>
</dbReference>
<dbReference type="Pfam" id="PF13646">
    <property type="entry name" value="HEAT_2"/>
    <property type="match status" value="1"/>
</dbReference>
<dbReference type="Pfam" id="PF08712">
    <property type="entry name" value="Nfu_N"/>
    <property type="match status" value="1"/>
</dbReference>
<dbReference type="Pfam" id="PF13769">
    <property type="entry name" value="Virulence_fact"/>
    <property type="match status" value="1"/>
</dbReference>
<dbReference type="SMART" id="SM00567">
    <property type="entry name" value="EZ_HEAT"/>
    <property type="match status" value="3"/>
</dbReference>
<dbReference type="SMART" id="SM00932">
    <property type="entry name" value="Nfu_N"/>
    <property type="match status" value="1"/>
</dbReference>
<dbReference type="SUPFAM" id="SSF48371">
    <property type="entry name" value="ARM repeat"/>
    <property type="match status" value="1"/>
</dbReference>
<dbReference type="SUPFAM" id="SSF110836">
    <property type="entry name" value="Hypothetical protein SAV1430"/>
    <property type="match status" value="1"/>
</dbReference>